<name>NU3C_LOBMA</name>
<feature type="chain" id="PRO_0000362847" description="NAD(P)H-quinone oxidoreductase subunit 3, chloroplastic">
    <location>
        <begin position="1"/>
        <end position="120"/>
    </location>
</feature>
<feature type="transmembrane region" description="Helical" evidence="1">
    <location>
        <begin position="9"/>
        <end position="29"/>
    </location>
</feature>
<feature type="transmembrane region" description="Helical" evidence="1">
    <location>
        <begin position="64"/>
        <end position="84"/>
    </location>
</feature>
<feature type="transmembrane region" description="Helical" evidence="1">
    <location>
        <begin position="88"/>
        <end position="108"/>
    </location>
</feature>
<evidence type="ECO:0000255" key="1">
    <source>
        <dbReference type="HAMAP-Rule" id="MF_01394"/>
    </source>
</evidence>
<dbReference type="EC" id="7.1.1.-" evidence="1"/>
<dbReference type="EMBL" id="AP009375">
    <property type="protein sequence ID" value="BAF50554.1"/>
    <property type="molecule type" value="Genomic_DNA"/>
</dbReference>
<dbReference type="RefSeq" id="YP_001123730.1">
    <property type="nucleotide sequence ID" value="NC_009274.1"/>
</dbReference>
<dbReference type="SMR" id="A4QLJ9"/>
<dbReference type="GeneID" id="4964853"/>
<dbReference type="GO" id="GO:0009535">
    <property type="term" value="C:chloroplast thylakoid membrane"/>
    <property type="evidence" value="ECO:0007669"/>
    <property type="project" value="UniProtKB-SubCell"/>
</dbReference>
<dbReference type="GO" id="GO:0030964">
    <property type="term" value="C:NADH dehydrogenase complex"/>
    <property type="evidence" value="ECO:0007669"/>
    <property type="project" value="TreeGrafter"/>
</dbReference>
<dbReference type="GO" id="GO:0008137">
    <property type="term" value="F:NADH dehydrogenase (ubiquinone) activity"/>
    <property type="evidence" value="ECO:0007669"/>
    <property type="project" value="InterPro"/>
</dbReference>
<dbReference type="GO" id="GO:0048038">
    <property type="term" value="F:quinone binding"/>
    <property type="evidence" value="ECO:0007669"/>
    <property type="project" value="UniProtKB-KW"/>
</dbReference>
<dbReference type="GO" id="GO:0019684">
    <property type="term" value="P:photosynthesis, light reaction"/>
    <property type="evidence" value="ECO:0007669"/>
    <property type="project" value="UniProtKB-UniRule"/>
</dbReference>
<dbReference type="FunFam" id="1.20.58.1610:FF:000001">
    <property type="entry name" value="NAD(P)H-quinone oxidoreductase subunit 3, chloroplastic"/>
    <property type="match status" value="1"/>
</dbReference>
<dbReference type="Gene3D" id="1.20.58.1610">
    <property type="entry name" value="NADH:ubiquinone/plastoquinone oxidoreductase, chain 3"/>
    <property type="match status" value="1"/>
</dbReference>
<dbReference type="HAMAP" id="MF_01394">
    <property type="entry name" value="NDH1_NuoA"/>
    <property type="match status" value="1"/>
</dbReference>
<dbReference type="InterPro" id="IPR023043">
    <property type="entry name" value="NAD(P)H_OxRDtase_bac/plastid"/>
</dbReference>
<dbReference type="InterPro" id="IPR000440">
    <property type="entry name" value="NADH_UbQ/plastoQ_OxRdtase_su3"/>
</dbReference>
<dbReference type="InterPro" id="IPR038430">
    <property type="entry name" value="NDAH_ubi_oxred_su3_sf"/>
</dbReference>
<dbReference type="PANTHER" id="PTHR11058">
    <property type="entry name" value="NADH-UBIQUINONE OXIDOREDUCTASE CHAIN 3"/>
    <property type="match status" value="1"/>
</dbReference>
<dbReference type="PANTHER" id="PTHR11058:SF9">
    <property type="entry name" value="NADH-UBIQUINONE OXIDOREDUCTASE CHAIN 3"/>
    <property type="match status" value="1"/>
</dbReference>
<dbReference type="Pfam" id="PF00507">
    <property type="entry name" value="Oxidored_q4"/>
    <property type="match status" value="1"/>
</dbReference>
<proteinExistence type="inferred from homology"/>
<reference key="1">
    <citation type="submission" date="2007-03" db="EMBL/GenBank/DDBJ databases">
        <title>Sequencing analysis of Lobularia maritima chloroplast DNA.</title>
        <authorList>
            <person name="Hosouchi T."/>
            <person name="Tsuruoka H."/>
            <person name="Kotani H."/>
        </authorList>
    </citation>
    <scope>NUCLEOTIDE SEQUENCE [LARGE SCALE GENOMIC DNA]</scope>
</reference>
<sequence>MFLLYEYDIFWAFLIISSAIPVLAFLISGVLSPIRKGPEKLSSYESGIEPIGDAWLQFRIRYYMFALVFVVFDVETVFLYPWAMSFDVLGVSAFIEAFIFVLILILGLVYAWRKGALEWS</sequence>
<comment type="function">
    <text evidence="1">NDH shuttles electrons from NAD(P)H:plastoquinone, via FMN and iron-sulfur (Fe-S) centers, to quinones in the photosynthetic chain and possibly in a chloroplast respiratory chain. The immediate electron acceptor for the enzyme in this species is believed to be plastoquinone. Couples the redox reaction to proton translocation, and thus conserves the redox energy in a proton gradient.</text>
</comment>
<comment type="catalytic activity">
    <reaction evidence="1">
        <text>a plastoquinone + NADH + (n+1) H(+)(in) = a plastoquinol + NAD(+) + n H(+)(out)</text>
        <dbReference type="Rhea" id="RHEA:42608"/>
        <dbReference type="Rhea" id="RHEA-COMP:9561"/>
        <dbReference type="Rhea" id="RHEA-COMP:9562"/>
        <dbReference type="ChEBI" id="CHEBI:15378"/>
        <dbReference type="ChEBI" id="CHEBI:17757"/>
        <dbReference type="ChEBI" id="CHEBI:57540"/>
        <dbReference type="ChEBI" id="CHEBI:57945"/>
        <dbReference type="ChEBI" id="CHEBI:62192"/>
    </reaction>
</comment>
<comment type="catalytic activity">
    <reaction evidence="1">
        <text>a plastoquinone + NADPH + (n+1) H(+)(in) = a plastoquinol + NADP(+) + n H(+)(out)</text>
        <dbReference type="Rhea" id="RHEA:42612"/>
        <dbReference type="Rhea" id="RHEA-COMP:9561"/>
        <dbReference type="Rhea" id="RHEA-COMP:9562"/>
        <dbReference type="ChEBI" id="CHEBI:15378"/>
        <dbReference type="ChEBI" id="CHEBI:17757"/>
        <dbReference type="ChEBI" id="CHEBI:57783"/>
        <dbReference type="ChEBI" id="CHEBI:58349"/>
        <dbReference type="ChEBI" id="CHEBI:62192"/>
    </reaction>
</comment>
<comment type="subunit">
    <text evidence="1">NDH is composed of at least 16 different subunits, 5 of which are encoded in the nucleus.</text>
</comment>
<comment type="subcellular location">
    <subcellularLocation>
        <location evidence="1">Plastid</location>
        <location evidence="1">Chloroplast thylakoid membrane</location>
        <topology evidence="1">Multi-pass membrane protein</topology>
    </subcellularLocation>
</comment>
<comment type="similarity">
    <text evidence="1">Belongs to the complex I subunit 3 family.</text>
</comment>
<gene>
    <name evidence="1" type="primary">ndhC</name>
</gene>
<accession>A4QLJ9</accession>
<geneLocation type="chloroplast"/>
<protein>
    <recommendedName>
        <fullName evidence="1">NAD(P)H-quinone oxidoreductase subunit 3, chloroplastic</fullName>
        <ecNumber evidence="1">7.1.1.-</ecNumber>
    </recommendedName>
    <alternativeName>
        <fullName evidence="1">NAD(P)H dehydrogenase subunit 3</fullName>
    </alternativeName>
    <alternativeName>
        <fullName evidence="1">NADH-plastoquinone oxidoreductase subunit 3</fullName>
    </alternativeName>
</protein>
<keyword id="KW-0150">Chloroplast</keyword>
<keyword id="KW-0472">Membrane</keyword>
<keyword id="KW-0520">NAD</keyword>
<keyword id="KW-0521">NADP</keyword>
<keyword id="KW-0934">Plastid</keyword>
<keyword id="KW-0618">Plastoquinone</keyword>
<keyword id="KW-0874">Quinone</keyword>
<keyword id="KW-0793">Thylakoid</keyword>
<keyword id="KW-1278">Translocase</keyword>
<keyword id="KW-0812">Transmembrane</keyword>
<keyword id="KW-1133">Transmembrane helix</keyword>
<keyword id="KW-0813">Transport</keyword>
<organism>
    <name type="scientific">Lobularia maritima</name>
    <name type="common">Sweet alyssum</name>
    <name type="synonym">Alyssum maritimum</name>
    <dbReference type="NCBI Taxonomy" id="226051"/>
    <lineage>
        <taxon>Eukaryota</taxon>
        <taxon>Viridiplantae</taxon>
        <taxon>Streptophyta</taxon>
        <taxon>Embryophyta</taxon>
        <taxon>Tracheophyta</taxon>
        <taxon>Spermatophyta</taxon>
        <taxon>Magnoliopsida</taxon>
        <taxon>eudicotyledons</taxon>
        <taxon>Gunneridae</taxon>
        <taxon>Pentapetalae</taxon>
        <taxon>rosids</taxon>
        <taxon>malvids</taxon>
        <taxon>Brassicales</taxon>
        <taxon>Brassicaceae</taxon>
        <taxon>Anastaticeae</taxon>
        <taxon>Lobularia</taxon>
    </lineage>
</organism>